<accession>Q54N48</accession>
<feature type="chain" id="PRO_0000375189" description="Protein CLP1 homolog">
    <location>
        <begin position="1"/>
        <end position="459"/>
    </location>
</feature>
<feature type="region of interest" description="Disordered" evidence="2">
    <location>
        <begin position="1"/>
        <end position="43"/>
    </location>
</feature>
<feature type="compositionally biased region" description="Polar residues" evidence="2">
    <location>
        <begin position="1"/>
        <end position="15"/>
    </location>
</feature>
<feature type="binding site" evidence="1">
    <location>
        <position position="55"/>
    </location>
    <ligand>
        <name>ATP</name>
        <dbReference type="ChEBI" id="CHEBI:30616"/>
    </ligand>
</feature>
<feature type="binding site" evidence="1">
    <location>
        <position position="94"/>
    </location>
    <ligand>
        <name>ATP</name>
        <dbReference type="ChEBI" id="CHEBI:30616"/>
    </ligand>
</feature>
<feature type="binding site" evidence="1">
    <location>
        <begin position="156"/>
        <end position="161"/>
    </location>
    <ligand>
        <name>ATP</name>
        <dbReference type="ChEBI" id="CHEBI:30616"/>
    </ligand>
</feature>
<organism>
    <name type="scientific">Dictyostelium discoideum</name>
    <name type="common">Social amoeba</name>
    <dbReference type="NCBI Taxonomy" id="44689"/>
    <lineage>
        <taxon>Eukaryota</taxon>
        <taxon>Amoebozoa</taxon>
        <taxon>Evosea</taxon>
        <taxon>Eumycetozoa</taxon>
        <taxon>Dictyostelia</taxon>
        <taxon>Dictyosteliales</taxon>
        <taxon>Dictyosteliaceae</taxon>
        <taxon>Dictyostelium</taxon>
    </lineage>
</organism>
<evidence type="ECO:0000255" key="1">
    <source>
        <dbReference type="HAMAP-Rule" id="MF_03035"/>
    </source>
</evidence>
<evidence type="ECO:0000256" key="2">
    <source>
        <dbReference type="SAM" id="MobiDB-lite"/>
    </source>
</evidence>
<evidence type="ECO:0000305" key="3"/>
<gene>
    <name type="primary">clp1</name>
    <name type="ORF">DDB_G0285507</name>
</gene>
<reference key="1">
    <citation type="journal article" date="2005" name="Nature">
        <title>The genome of the social amoeba Dictyostelium discoideum.</title>
        <authorList>
            <person name="Eichinger L."/>
            <person name="Pachebat J.A."/>
            <person name="Gloeckner G."/>
            <person name="Rajandream M.A."/>
            <person name="Sucgang R."/>
            <person name="Berriman M."/>
            <person name="Song J."/>
            <person name="Olsen R."/>
            <person name="Szafranski K."/>
            <person name="Xu Q."/>
            <person name="Tunggal B."/>
            <person name="Kummerfeld S."/>
            <person name="Madera M."/>
            <person name="Konfortov B.A."/>
            <person name="Rivero F."/>
            <person name="Bankier A.T."/>
            <person name="Lehmann R."/>
            <person name="Hamlin N."/>
            <person name="Davies R."/>
            <person name="Gaudet P."/>
            <person name="Fey P."/>
            <person name="Pilcher K."/>
            <person name="Chen G."/>
            <person name="Saunders D."/>
            <person name="Sodergren E.J."/>
            <person name="Davis P."/>
            <person name="Kerhornou A."/>
            <person name="Nie X."/>
            <person name="Hall N."/>
            <person name="Anjard C."/>
            <person name="Hemphill L."/>
            <person name="Bason N."/>
            <person name="Farbrother P."/>
            <person name="Desany B."/>
            <person name="Just E."/>
            <person name="Morio T."/>
            <person name="Rost R."/>
            <person name="Churcher C.M."/>
            <person name="Cooper J."/>
            <person name="Haydock S."/>
            <person name="van Driessche N."/>
            <person name="Cronin A."/>
            <person name="Goodhead I."/>
            <person name="Muzny D.M."/>
            <person name="Mourier T."/>
            <person name="Pain A."/>
            <person name="Lu M."/>
            <person name="Harper D."/>
            <person name="Lindsay R."/>
            <person name="Hauser H."/>
            <person name="James K.D."/>
            <person name="Quiles M."/>
            <person name="Madan Babu M."/>
            <person name="Saito T."/>
            <person name="Buchrieser C."/>
            <person name="Wardroper A."/>
            <person name="Felder M."/>
            <person name="Thangavelu M."/>
            <person name="Johnson D."/>
            <person name="Knights A."/>
            <person name="Loulseged H."/>
            <person name="Mungall K.L."/>
            <person name="Oliver K."/>
            <person name="Price C."/>
            <person name="Quail M.A."/>
            <person name="Urushihara H."/>
            <person name="Hernandez J."/>
            <person name="Rabbinowitsch E."/>
            <person name="Steffen D."/>
            <person name="Sanders M."/>
            <person name="Ma J."/>
            <person name="Kohara Y."/>
            <person name="Sharp S."/>
            <person name="Simmonds M.N."/>
            <person name="Spiegler S."/>
            <person name="Tivey A."/>
            <person name="Sugano S."/>
            <person name="White B."/>
            <person name="Walker D."/>
            <person name="Woodward J.R."/>
            <person name="Winckler T."/>
            <person name="Tanaka Y."/>
            <person name="Shaulsky G."/>
            <person name="Schleicher M."/>
            <person name="Weinstock G.M."/>
            <person name="Rosenthal A."/>
            <person name="Cox E.C."/>
            <person name="Chisholm R.L."/>
            <person name="Gibbs R.A."/>
            <person name="Loomis W.F."/>
            <person name="Platzer M."/>
            <person name="Kay R.R."/>
            <person name="Williams J.G."/>
            <person name="Dear P.H."/>
            <person name="Noegel A.A."/>
            <person name="Barrell B.G."/>
            <person name="Kuspa A."/>
        </authorList>
    </citation>
    <scope>NUCLEOTIDE SEQUENCE [LARGE SCALE GENOMIC DNA]</scope>
    <source>
        <strain>AX4</strain>
    </source>
</reference>
<protein>
    <recommendedName>
        <fullName evidence="1">Protein CLP1 homolog</fullName>
    </recommendedName>
</protein>
<name>CLP1_DICDI</name>
<comment type="function">
    <text evidence="1">Required for endonucleolytic cleavage during polyadenylation-dependent pre-mRNA 3'-end formation.</text>
</comment>
<comment type="subcellular location">
    <subcellularLocation>
        <location evidence="3">Nucleus</location>
    </subcellularLocation>
</comment>
<comment type="similarity">
    <text evidence="1">Belongs to the Clp1 family. Clp1 subfamily.</text>
</comment>
<dbReference type="EMBL" id="AAFI02000079">
    <property type="protein sequence ID" value="EAL64591.1"/>
    <property type="molecule type" value="Genomic_DNA"/>
</dbReference>
<dbReference type="RefSeq" id="XP_638095.1">
    <property type="nucleotide sequence ID" value="XM_633003.1"/>
</dbReference>
<dbReference type="SMR" id="Q54N48"/>
<dbReference type="FunCoup" id="Q54N48">
    <property type="interactions" value="632"/>
</dbReference>
<dbReference type="STRING" id="44689.Q54N48"/>
<dbReference type="GlyGen" id="Q54N48">
    <property type="glycosylation" value="1 site"/>
</dbReference>
<dbReference type="PaxDb" id="44689-DDB0235305"/>
<dbReference type="EnsemblProtists" id="EAL64591">
    <property type="protein sequence ID" value="EAL64591"/>
    <property type="gene ID" value="DDB_G0285507"/>
</dbReference>
<dbReference type="GeneID" id="8625143"/>
<dbReference type="KEGG" id="ddi:DDB_G0285507"/>
<dbReference type="dictyBase" id="DDB_G0285507">
    <property type="gene designation" value="clp1"/>
</dbReference>
<dbReference type="VEuPathDB" id="AmoebaDB:DDB_G0285507"/>
<dbReference type="eggNOG" id="KOG2749">
    <property type="taxonomic scope" value="Eukaryota"/>
</dbReference>
<dbReference type="HOGENOM" id="CLU_018195_1_0_1"/>
<dbReference type="InParanoid" id="Q54N48"/>
<dbReference type="OMA" id="VQYVNCH"/>
<dbReference type="PhylomeDB" id="Q54N48"/>
<dbReference type="PRO" id="PR:Q54N48"/>
<dbReference type="Proteomes" id="UP000002195">
    <property type="component" value="Chromosome 4"/>
</dbReference>
<dbReference type="GO" id="GO:0005849">
    <property type="term" value="C:mRNA cleavage factor complex"/>
    <property type="evidence" value="ECO:0007669"/>
    <property type="project" value="InterPro"/>
</dbReference>
<dbReference type="GO" id="GO:0005634">
    <property type="term" value="C:nucleus"/>
    <property type="evidence" value="ECO:0000318"/>
    <property type="project" value="GO_Central"/>
</dbReference>
<dbReference type="GO" id="GO:0005524">
    <property type="term" value="F:ATP binding"/>
    <property type="evidence" value="ECO:0007669"/>
    <property type="project" value="UniProtKB-UniRule"/>
</dbReference>
<dbReference type="GO" id="GO:0051731">
    <property type="term" value="F:polynucleotide 5'-hydroxyl-kinase activity"/>
    <property type="evidence" value="ECO:0000318"/>
    <property type="project" value="GO_Central"/>
</dbReference>
<dbReference type="GO" id="GO:0031124">
    <property type="term" value="P:mRNA 3'-end processing"/>
    <property type="evidence" value="ECO:0007669"/>
    <property type="project" value="UniProtKB-UniRule"/>
</dbReference>
<dbReference type="GO" id="GO:0006388">
    <property type="term" value="P:tRNA splicing, via endonucleolytic cleavage and ligation"/>
    <property type="evidence" value="ECO:0000318"/>
    <property type="project" value="GO_Central"/>
</dbReference>
<dbReference type="FunFam" id="2.60.120.1030:FF:000005">
    <property type="entry name" value="mRNA cleavage and polyadenylation factor CLP1"/>
    <property type="match status" value="1"/>
</dbReference>
<dbReference type="FunFam" id="2.40.30.330:FF:000002">
    <property type="entry name" value="Protein CLP1 homolog"/>
    <property type="match status" value="1"/>
</dbReference>
<dbReference type="FunFam" id="3.40.50.300:FF:002526">
    <property type="entry name" value="Protein CLP1 homolog"/>
    <property type="match status" value="1"/>
</dbReference>
<dbReference type="Gene3D" id="2.60.120.1030">
    <property type="entry name" value="Clp1, DNA binding domain"/>
    <property type="match status" value="1"/>
</dbReference>
<dbReference type="Gene3D" id="3.40.50.300">
    <property type="entry name" value="P-loop containing nucleotide triphosphate hydrolases"/>
    <property type="match status" value="1"/>
</dbReference>
<dbReference type="Gene3D" id="2.40.30.330">
    <property type="entry name" value="Pre-mRNA cleavage complex subunit Clp1, C-terminal domain"/>
    <property type="match status" value="1"/>
</dbReference>
<dbReference type="HAMAP" id="MF_03035">
    <property type="entry name" value="Clp1"/>
    <property type="match status" value="1"/>
</dbReference>
<dbReference type="InterPro" id="IPR028606">
    <property type="entry name" value="Clp1"/>
</dbReference>
<dbReference type="InterPro" id="IPR045116">
    <property type="entry name" value="Clp1/Grc3"/>
</dbReference>
<dbReference type="InterPro" id="IPR010655">
    <property type="entry name" value="Clp1_C"/>
</dbReference>
<dbReference type="InterPro" id="IPR038238">
    <property type="entry name" value="Clp1_C_sf"/>
</dbReference>
<dbReference type="InterPro" id="IPR032324">
    <property type="entry name" value="Clp1_N"/>
</dbReference>
<dbReference type="InterPro" id="IPR038239">
    <property type="entry name" value="Clp1_N_sf"/>
</dbReference>
<dbReference type="InterPro" id="IPR032319">
    <property type="entry name" value="CLP1_P"/>
</dbReference>
<dbReference type="InterPro" id="IPR027417">
    <property type="entry name" value="P-loop_NTPase"/>
</dbReference>
<dbReference type="PANTHER" id="PTHR12755">
    <property type="entry name" value="CLEAVAGE/POLYADENYLATION FACTOR IA SUBUNIT CLP1P"/>
    <property type="match status" value="1"/>
</dbReference>
<dbReference type="PANTHER" id="PTHR12755:SF6">
    <property type="entry name" value="POLYRIBONUCLEOTIDE 5'-HYDROXYL-KINASE CLP1"/>
    <property type="match status" value="1"/>
</dbReference>
<dbReference type="Pfam" id="PF06807">
    <property type="entry name" value="Clp1"/>
    <property type="match status" value="1"/>
</dbReference>
<dbReference type="Pfam" id="PF16573">
    <property type="entry name" value="CLP1_N"/>
    <property type="match status" value="1"/>
</dbReference>
<dbReference type="Pfam" id="PF16575">
    <property type="entry name" value="CLP1_P"/>
    <property type="match status" value="1"/>
</dbReference>
<dbReference type="SUPFAM" id="SSF52540">
    <property type="entry name" value="P-loop containing nucleoside triphosphate hydrolases"/>
    <property type="match status" value="1"/>
</dbReference>
<keyword id="KW-0067">ATP-binding</keyword>
<keyword id="KW-0507">mRNA processing</keyword>
<keyword id="KW-0547">Nucleotide-binding</keyword>
<keyword id="KW-0539">Nucleus</keyword>
<keyword id="KW-1185">Reference proteome</keyword>
<sequence>MSNDNSVNINNFSSMNGGGGGSDIQFPLKPSQQQQQQQQNSINQSTIRTLEITQELRYEIDFDQNGWMKLIEGTAECFGTELSLNKVYKLSGTKGAVFTWTGCKIEITNNCQPYIGEKTPMPQYAGVYQELDAFRVSILDEPKKSGPRVIIVGPTDSGKSSLSKILLAYSARSGYQPLFVDLDPGQGSITIPGTISAAHIQNPLDIEEGLAGGIPLAHFYGHTSLDVNPDLFKALCKNLASFIDKQLDSSNISRISGFIANTCGWIDGLGYKILLQNIDVFKANLIIVMDNEKLYSDISSHYSQKDNSIKIIKLPKSGGVFIRPPVFRKKTRMNRIKEYFNGINDNLSPHYIVLDFKDVSIYRTGGGPAAPASALPIGTSSQIDPLQITEVYPSLDMCHSIFAISYAKQASNIFHSNVAGFLYVSDIDMETKKITVISPAPGPLPSRFLLLGTLKWMEN</sequence>
<proteinExistence type="inferred from homology"/>